<feature type="chain" id="PRO_0000103339" description="DNA polymerase III subunit alpha">
    <location>
        <begin position="1"/>
        <end position="1065"/>
    </location>
</feature>
<organism>
    <name type="scientific">Staphylococcus aureus (strain COL)</name>
    <dbReference type="NCBI Taxonomy" id="93062"/>
    <lineage>
        <taxon>Bacteria</taxon>
        <taxon>Bacillati</taxon>
        <taxon>Bacillota</taxon>
        <taxon>Bacilli</taxon>
        <taxon>Bacillales</taxon>
        <taxon>Staphylococcaceae</taxon>
        <taxon>Staphylococcus</taxon>
    </lineage>
</organism>
<protein>
    <recommendedName>
        <fullName>DNA polymerase III subunit alpha</fullName>
        <ecNumber>2.7.7.7</ecNumber>
    </recommendedName>
</protein>
<gene>
    <name type="primary">dnaE</name>
    <name type="ordered locus">SACOL1750</name>
</gene>
<comment type="function">
    <text evidence="1">DNA polymerase III is a complex, multichain enzyme responsible for most of the replicative synthesis in bacteria. This DNA polymerase also exhibits 3' to 5' exonuclease activity. The alpha chain is the DNA polymerase (By similarity).</text>
</comment>
<comment type="catalytic activity">
    <reaction>
        <text>DNA(n) + a 2'-deoxyribonucleoside 5'-triphosphate = DNA(n+1) + diphosphate</text>
        <dbReference type="Rhea" id="RHEA:22508"/>
        <dbReference type="Rhea" id="RHEA-COMP:17339"/>
        <dbReference type="Rhea" id="RHEA-COMP:17340"/>
        <dbReference type="ChEBI" id="CHEBI:33019"/>
        <dbReference type="ChEBI" id="CHEBI:61560"/>
        <dbReference type="ChEBI" id="CHEBI:173112"/>
        <dbReference type="EC" id="2.7.7.7"/>
    </reaction>
</comment>
<comment type="subunit">
    <text evidence="1">DNA polymerase III contains a core (composed of alpha, epsilon and theta chains) that associates with a tau subunit. This core dimerizes to form the PolIII' complex. PolIII' associates with the gamma complex (composed of gamma, delta, delta', psi and chi chains) and with the beta chain to form the complete DNA polymerase III complex (By similarity).</text>
</comment>
<comment type="subcellular location">
    <subcellularLocation>
        <location evidence="1">Cytoplasm</location>
    </subcellularLocation>
</comment>
<comment type="similarity">
    <text evidence="2">Belongs to the DNA polymerase type-C family. DnaE subfamily.</text>
</comment>
<evidence type="ECO:0000250" key="1"/>
<evidence type="ECO:0000305" key="2"/>
<sequence length="1065" mass="122964">MVAYLNIHTAYDLLNSSLKIEDAVRLAVSENVDALAITDTNVLYGFPKFYDACIANNIKPIFGMTIYVTNGLNTVETVVLAKNNDGLKDLYQLSSEIKMNALEHVSFELLKRFSNNMIIIFKKVGDQHRDIVQVFETHNDTYMDHLSISIQGRKHVWIQNVCYQTRQDADTISALAAIRDNTKLDLIHDQEDFGAHFLTEKEINQLDINQEYLTQVDVIAQKCDAELKYHQSLLPQYETPNDESAKKYLWRVLVTQLKKLELNYDVYLERLKYEYKVITNMGFEDYFLIVSDLIHYAKTNDVMVGPGRGSSAGSLVSYLLGITTIDPIKFNLLFERFLNPERVTMPDIDIDFEDTRRERVIQYVQEKYGELHVSGIVTFGHLLARAVARDVGRIMGFDEVTLNEISSLIPHKLGITLDEAYQIDDFKKFVHRNHRHERWFSICKKLEGLPRHTSTHAAGIIINDHPLYEYAPLTKGDTGLLTQWTMTEAERIGLLKIDFLGLRNLSIIHQILTQVKKDLGINIDIEKIPFDDQKVFELLSQGDTTGIFQLESDGVRSVLKKLKPEHFEDIVAVTSLYRPGPMEEIPTYITRRHDPSKVQYLHPHLEPILKNTYGVIIYQEQIMQIASTFANFSYGEADILRRAMSKKNRAVLESERQHFIEGAKQNGYHEDISKQIFDLILKFADYGFPRAHAVSYSKIAYIMSFLKVHYPNYFYANILSNVIGSEKKTAQMIEEAKKQGITILPPNINESHWFYKPSQEGIYLSIGTIKGVGYQSVKVIVDERYQNGKFKDFFDFARRIPKRVKTRKLLEALILVGAFDAFGKTRSTLLQAIDQVLDGDLNIEQDGFLFDILTPKQMYEDKEELPDALISQYEKEYLGFYVSQHPVDKKFVAKQYLTIFKLSNAQNYKPILVQFDKVKQIRTKNGQNMAFVTLNDGIETLDGVIFPNQFKKYEELLSHNDLFIVSGKFDHRKQQRQLIINEIQTLATFEEQKLAFAKQIIIRNKSQIDMFEEMIKATKENANDVVLSFYDETIKQMTTLGYINQKDSMFNNFIQSFNPSDIRLI</sequence>
<dbReference type="EC" id="2.7.7.7"/>
<dbReference type="EMBL" id="CP000046">
    <property type="protein sequence ID" value="AAW36853.1"/>
    <property type="molecule type" value="Genomic_DNA"/>
</dbReference>
<dbReference type="RefSeq" id="WP_000226911.1">
    <property type="nucleotide sequence ID" value="NZ_JBGOFO010000008.1"/>
</dbReference>
<dbReference type="SMR" id="Q5HF71"/>
<dbReference type="KEGG" id="sac:SACOL1750"/>
<dbReference type="HOGENOM" id="CLU_001600_0_0_9"/>
<dbReference type="Proteomes" id="UP000000530">
    <property type="component" value="Chromosome"/>
</dbReference>
<dbReference type="GO" id="GO:0005737">
    <property type="term" value="C:cytoplasm"/>
    <property type="evidence" value="ECO:0007669"/>
    <property type="project" value="UniProtKB-SubCell"/>
</dbReference>
<dbReference type="GO" id="GO:0008408">
    <property type="term" value="F:3'-5' exonuclease activity"/>
    <property type="evidence" value="ECO:0007669"/>
    <property type="project" value="InterPro"/>
</dbReference>
<dbReference type="GO" id="GO:0003887">
    <property type="term" value="F:DNA-directed DNA polymerase activity"/>
    <property type="evidence" value="ECO:0007669"/>
    <property type="project" value="UniProtKB-KW"/>
</dbReference>
<dbReference type="GO" id="GO:0003676">
    <property type="term" value="F:nucleic acid binding"/>
    <property type="evidence" value="ECO:0007669"/>
    <property type="project" value="InterPro"/>
</dbReference>
<dbReference type="GO" id="GO:0006260">
    <property type="term" value="P:DNA replication"/>
    <property type="evidence" value="ECO:0007669"/>
    <property type="project" value="UniProtKB-KW"/>
</dbReference>
<dbReference type="CDD" id="cd04485">
    <property type="entry name" value="DnaE_OBF"/>
    <property type="match status" value="1"/>
</dbReference>
<dbReference type="CDD" id="cd07431">
    <property type="entry name" value="PHP_PolIIIA"/>
    <property type="match status" value="1"/>
</dbReference>
<dbReference type="Gene3D" id="1.10.150.870">
    <property type="match status" value="1"/>
</dbReference>
<dbReference type="Gene3D" id="1.10.10.1600">
    <property type="entry name" value="Bacterial DNA polymerase III alpha subunit, thumb domain"/>
    <property type="match status" value="1"/>
</dbReference>
<dbReference type="Gene3D" id="3.20.20.140">
    <property type="entry name" value="Metal-dependent hydrolases"/>
    <property type="match status" value="1"/>
</dbReference>
<dbReference type="InterPro" id="IPR011708">
    <property type="entry name" value="DNA_pol3_alpha_NTPase_dom"/>
</dbReference>
<dbReference type="InterPro" id="IPR041931">
    <property type="entry name" value="DNA_pol3_alpha_thumb_dom"/>
</dbReference>
<dbReference type="InterPro" id="IPR040982">
    <property type="entry name" value="DNA_pol3_finger"/>
</dbReference>
<dbReference type="InterPro" id="IPR004805">
    <property type="entry name" value="DnaE2/DnaE/PolC"/>
</dbReference>
<dbReference type="InterPro" id="IPR029460">
    <property type="entry name" value="DNAPol_HHH"/>
</dbReference>
<dbReference type="InterPro" id="IPR004365">
    <property type="entry name" value="NA-bd_OB_tRNA"/>
</dbReference>
<dbReference type="InterPro" id="IPR004013">
    <property type="entry name" value="PHP_dom"/>
</dbReference>
<dbReference type="InterPro" id="IPR003141">
    <property type="entry name" value="Pol/His_phosphatase_N"/>
</dbReference>
<dbReference type="InterPro" id="IPR016195">
    <property type="entry name" value="Pol/histidinol_Pase-like"/>
</dbReference>
<dbReference type="NCBIfam" id="TIGR00594">
    <property type="entry name" value="polc"/>
    <property type="match status" value="1"/>
</dbReference>
<dbReference type="PANTHER" id="PTHR32294">
    <property type="entry name" value="DNA POLYMERASE III SUBUNIT ALPHA"/>
    <property type="match status" value="1"/>
</dbReference>
<dbReference type="PANTHER" id="PTHR32294:SF0">
    <property type="entry name" value="DNA POLYMERASE III SUBUNIT ALPHA"/>
    <property type="match status" value="1"/>
</dbReference>
<dbReference type="Pfam" id="PF07733">
    <property type="entry name" value="DNA_pol3_alpha"/>
    <property type="match status" value="1"/>
</dbReference>
<dbReference type="Pfam" id="PF17657">
    <property type="entry name" value="DNA_pol3_finger"/>
    <property type="match status" value="1"/>
</dbReference>
<dbReference type="Pfam" id="PF14579">
    <property type="entry name" value="HHH_6"/>
    <property type="match status" value="1"/>
</dbReference>
<dbReference type="Pfam" id="PF02811">
    <property type="entry name" value="PHP"/>
    <property type="match status" value="1"/>
</dbReference>
<dbReference type="Pfam" id="PF01336">
    <property type="entry name" value="tRNA_anti-codon"/>
    <property type="match status" value="1"/>
</dbReference>
<dbReference type="SMART" id="SM00481">
    <property type="entry name" value="POLIIIAc"/>
    <property type="match status" value="1"/>
</dbReference>
<dbReference type="SUPFAM" id="SSF89550">
    <property type="entry name" value="PHP domain-like"/>
    <property type="match status" value="1"/>
</dbReference>
<name>DPO3A_STAAC</name>
<keyword id="KW-0963">Cytoplasm</keyword>
<keyword id="KW-0235">DNA replication</keyword>
<keyword id="KW-0239">DNA-directed DNA polymerase</keyword>
<keyword id="KW-0548">Nucleotidyltransferase</keyword>
<keyword id="KW-0808">Transferase</keyword>
<accession>Q5HF71</accession>
<reference key="1">
    <citation type="journal article" date="2005" name="J. Bacteriol.">
        <title>Insights on evolution of virulence and resistance from the complete genome analysis of an early methicillin-resistant Staphylococcus aureus strain and a biofilm-producing methicillin-resistant Staphylococcus epidermidis strain.</title>
        <authorList>
            <person name="Gill S.R."/>
            <person name="Fouts D.E."/>
            <person name="Archer G.L."/>
            <person name="Mongodin E.F."/>
            <person name="DeBoy R.T."/>
            <person name="Ravel J."/>
            <person name="Paulsen I.T."/>
            <person name="Kolonay J.F."/>
            <person name="Brinkac L.M."/>
            <person name="Beanan M.J."/>
            <person name="Dodson R.J."/>
            <person name="Daugherty S.C."/>
            <person name="Madupu R."/>
            <person name="Angiuoli S.V."/>
            <person name="Durkin A.S."/>
            <person name="Haft D.H."/>
            <person name="Vamathevan J.J."/>
            <person name="Khouri H."/>
            <person name="Utterback T.R."/>
            <person name="Lee C."/>
            <person name="Dimitrov G."/>
            <person name="Jiang L."/>
            <person name="Qin H."/>
            <person name="Weidman J."/>
            <person name="Tran K."/>
            <person name="Kang K.H."/>
            <person name="Hance I.R."/>
            <person name="Nelson K.E."/>
            <person name="Fraser C.M."/>
        </authorList>
    </citation>
    <scope>NUCLEOTIDE SEQUENCE [LARGE SCALE GENOMIC DNA]</scope>
    <source>
        <strain>COL</strain>
    </source>
</reference>
<proteinExistence type="inferred from homology"/>